<proteinExistence type="evidence at protein level"/>
<sequence>MAMASLARRKAYFLTRNLSNSPTDALRFSFSLSRGFASSGSDENDVVIIGGGPGGYVAAIKASQLGLKTTCIEKRGALGGTCLNVGCIPSKALLHSSHMYHEAKHSFANHGIKVSSVEVDLPAMLAQKDNAVKNLTRGIEGLFKKNKVTYVKGYGKFISPNEVSVETIDGGNTIVKGKHIIVATGSDVKSLPGITIDEKKIVSSTGALSLSEVPKKLIVIGAGYIGLEMGSVWGRLGSEVTVVEFAGDIVPSMDGEIRKQFQRSLEKQKMKFMLKTKVVSVDSSSDGVKLTVEPAEGGEQSILEADVVLVSAGRTPFTSGLDLEKIGVETDKAGRILVNDRFLSNVPGVYAIGDVIPGPMLAHKAEEDGVACVEFIAGKHGHVDYDKVPGVVYTHPEVASVGKTEEQLKKEGVSYRVGKFPFMANSRAKAIDNAEGLVKILADKETDKILGVHIMAPNAGELIHEAVLAINYDASSEDIARVCHAHPTMSEALKEAAMATYDKPIHI</sequence>
<protein>
    <recommendedName>
        <fullName>Dihydrolipoyl dehydrogenase 1, mitochondrial</fullName>
        <shortName>AtmLPD1</shortName>
        <shortName>mtLPD1</shortName>
        <ecNumber>1.8.1.4</ecNumber>
    </recommendedName>
    <alternativeName>
        <fullName>Dihydrolipoamide dehydrogenase 1</fullName>
    </alternativeName>
    <alternativeName>
        <fullName>Glycine cleavage system L protein 1</fullName>
    </alternativeName>
    <alternativeName>
        <fullName>Pyruvate dehydrogenase complex E3 subunit 1</fullName>
        <shortName>E3-1</shortName>
        <shortName>PDC-E3 1</shortName>
    </alternativeName>
</protein>
<dbReference type="EC" id="1.8.1.4"/>
<dbReference type="EMBL" id="AF228639">
    <property type="protein sequence ID" value="AAF34795.3"/>
    <property type="molecule type" value="mRNA"/>
</dbReference>
<dbReference type="EMBL" id="AC023673">
    <property type="protein sequence ID" value="AAF79529.1"/>
    <property type="status" value="ALT_INIT"/>
    <property type="molecule type" value="Genomic_DNA"/>
</dbReference>
<dbReference type="EMBL" id="AC051631">
    <property type="protein sequence ID" value="AAG51522.1"/>
    <property type="molecule type" value="Genomic_DNA"/>
</dbReference>
<dbReference type="EMBL" id="CP002684">
    <property type="protein sequence ID" value="AEE32239.1"/>
    <property type="molecule type" value="Genomic_DNA"/>
</dbReference>
<dbReference type="EMBL" id="CP002684">
    <property type="protein sequence ID" value="AEE32240.1"/>
    <property type="molecule type" value="Genomic_DNA"/>
</dbReference>
<dbReference type="EMBL" id="CP002684">
    <property type="protein sequence ID" value="ANM59707.1"/>
    <property type="molecule type" value="Genomic_DNA"/>
</dbReference>
<dbReference type="EMBL" id="CP002684">
    <property type="protein sequence ID" value="ANM59708.1"/>
    <property type="molecule type" value="Genomic_DNA"/>
</dbReference>
<dbReference type="EMBL" id="CP002684">
    <property type="protein sequence ID" value="ANM59709.1"/>
    <property type="molecule type" value="Genomic_DNA"/>
</dbReference>
<dbReference type="PIR" id="F96520">
    <property type="entry name" value="F96520"/>
</dbReference>
<dbReference type="SMR" id="Q9M5K3"/>
<dbReference type="BioGRID" id="26446">
    <property type="interactions" value="8"/>
</dbReference>
<dbReference type="FunCoup" id="Q9M5K3">
    <property type="interactions" value="2981"/>
</dbReference>
<dbReference type="IntAct" id="Q9M5K3">
    <property type="interactions" value="1"/>
</dbReference>
<dbReference type="STRING" id="3702.Q9M5K3"/>
<dbReference type="iPTMnet" id="Q9M5K3"/>
<dbReference type="MetOSite" id="Q9M5K3"/>
<dbReference type="PaxDb" id="3702-AT1G48030.2"/>
<dbReference type="ProteomicsDB" id="222209"/>
<dbReference type="EnsemblPlants" id="AT1G48030.1">
    <property type="protein sequence ID" value="AT1G48030.1"/>
    <property type="gene ID" value="AT1G48030"/>
</dbReference>
<dbReference type="EnsemblPlants" id="AT1G48030.2">
    <property type="protein sequence ID" value="AT1G48030.2"/>
    <property type="gene ID" value="AT1G48030"/>
</dbReference>
<dbReference type="EnsemblPlants" id="AT1G48030.3">
    <property type="protein sequence ID" value="AT1G48030.3"/>
    <property type="gene ID" value="AT1G48030"/>
</dbReference>
<dbReference type="EnsemblPlants" id="AT1G48030.4">
    <property type="protein sequence ID" value="AT1G48030.4"/>
    <property type="gene ID" value="AT1G48030"/>
</dbReference>
<dbReference type="EnsemblPlants" id="AT1G48030.5">
    <property type="protein sequence ID" value="AT1G48030.5"/>
    <property type="gene ID" value="AT1G48030"/>
</dbReference>
<dbReference type="GeneID" id="841221"/>
<dbReference type="Gramene" id="AT1G48030.1">
    <property type="protein sequence ID" value="AT1G48030.1"/>
    <property type="gene ID" value="AT1G48030"/>
</dbReference>
<dbReference type="Gramene" id="AT1G48030.2">
    <property type="protein sequence ID" value="AT1G48030.2"/>
    <property type="gene ID" value="AT1G48030"/>
</dbReference>
<dbReference type="Gramene" id="AT1G48030.3">
    <property type="protein sequence ID" value="AT1G48030.3"/>
    <property type="gene ID" value="AT1G48030"/>
</dbReference>
<dbReference type="Gramene" id="AT1G48030.4">
    <property type="protein sequence ID" value="AT1G48030.4"/>
    <property type="gene ID" value="AT1G48030"/>
</dbReference>
<dbReference type="Gramene" id="AT1G48030.5">
    <property type="protein sequence ID" value="AT1G48030.5"/>
    <property type="gene ID" value="AT1G48030"/>
</dbReference>
<dbReference type="KEGG" id="ath:AT1G48030"/>
<dbReference type="Araport" id="AT1G48030"/>
<dbReference type="TAIR" id="AT1G48030">
    <property type="gene designation" value="MTLPD1"/>
</dbReference>
<dbReference type="eggNOG" id="KOG1335">
    <property type="taxonomic scope" value="Eukaryota"/>
</dbReference>
<dbReference type="HOGENOM" id="CLU_016755_0_1_1"/>
<dbReference type="InParanoid" id="Q9M5K3"/>
<dbReference type="OMA" id="CAQLGMK"/>
<dbReference type="PhylomeDB" id="Q9M5K3"/>
<dbReference type="BioCyc" id="ARA:AT1G48030-MONOMER"/>
<dbReference type="BioCyc" id="MetaCyc:AT1G48030-MONOMER"/>
<dbReference type="BRENDA" id="1.4.1.27">
    <property type="organism ID" value="399"/>
</dbReference>
<dbReference type="CD-CODE" id="4299E36E">
    <property type="entry name" value="Nucleolus"/>
</dbReference>
<dbReference type="PRO" id="PR:Q9M5K3"/>
<dbReference type="Proteomes" id="UP000006548">
    <property type="component" value="Chromosome 1"/>
</dbReference>
<dbReference type="ExpressionAtlas" id="Q9M5K3">
    <property type="expression patterns" value="baseline and differential"/>
</dbReference>
<dbReference type="GO" id="GO:0048046">
    <property type="term" value="C:apoplast"/>
    <property type="evidence" value="ECO:0007005"/>
    <property type="project" value="TAIR"/>
</dbReference>
<dbReference type="GO" id="GO:0005759">
    <property type="term" value="C:mitochondrial matrix"/>
    <property type="evidence" value="ECO:0007669"/>
    <property type="project" value="UniProtKB-SubCell"/>
</dbReference>
<dbReference type="GO" id="GO:0005739">
    <property type="term" value="C:mitochondrion"/>
    <property type="evidence" value="ECO:0007005"/>
    <property type="project" value="TAIR"/>
</dbReference>
<dbReference type="GO" id="GO:0005634">
    <property type="term" value="C:nucleus"/>
    <property type="evidence" value="ECO:0007005"/>
    <property type="project" value="TAIR"/>
</dbReference>
<dbReference type="GO" id="GO:0005524">
    <property type="term" value="F:ATP binding"/>
    <property type="evidence" value="ECO:0007005"/>
    <property type="project" value="TAIR"/>
</dbReference>
<dbReference type="GO" id="GO:0050897">
    <property type="term" value="F:cobalt ion binding"/>
    <property type="evidence" value="ECO:0007005"/>
    <property type="project" value="TAIR"/>
</dbReference>
<dbReference type="GO" id="GO:0005507">
    <property type="term" value="F:copper ion binding"/>
    <property type="evidence" value="ECO:0007005"/>
    <property type="project" value="TAIR"/>
</dbReference>
<dbReference type="GO" id="GO:0004148">
    <property type="term" value="F:dihydrolipoyl dehydrogenase (NADH) activity"/>
    <property type="evidence" value="ECO:0007669"/>
    <property type="project" value="UniProtKB-EC"/>
</dbReference>
<dbReference type="GO" id="GO:0050660">
    <property type="term" value="F:flavin adenine dinucleotide binding"/>
    <property type="evidence" value="ECO:0007669"/>
    <property type="project" value="InterPro"/>
</dbReference>
<dbReference type="GO" id="GO:0008270">
    <property type="term" value="F:zinc ion binding"/>
    <property type="evidence" value="ECO:0007005"/>
    <property type="project" value="TAIR"/>
</dbReference>
<dbReference type="GO" id="GO:0046686">
    <property type="term" value="P:response to cadmium ion"/>
    <property type="evidence" value="ECO:0000270"/>
    <property type="project" value="TAIR"/>
</dbReference>
<dbReference type="FunFam" id="3.30.390.30:FF:000001">
    <property type="entry name" value="Dihydrolipoyl dehydrogenase"/>
    <property type="match status" value="1"/>
</dbReference>
<dbReference type="FunFam" id="3.50.50.60:FF:000001">
    <property type="entry name" value="Dihydrolipoyl dehydrogenase, mitochondrial"/>
    <property type="match status" value="1"/>
</dbReference>
<dbReference type="Gene3D" id="3.30.390.30">
    <property type="match status" value="1"/>
</dbReference>
<dbReference type="Gene3D" id="3.50.50.60">
    <property type="entry name" value="FAD/NAD(P)-binding domain"/>
    <property type="match status" value="2"/>
</dbReference>
<dbReference type="InterPro" id="IPR050151">
    <property type="entry name" value="Class-I_Pyr_Nuc-Dis_Oxidored"/>
</dbReference>
<dbReference type="InterPro" id="IPR036188">
    <property type="entry name" value="FAD/NAD-bd_sf"/>
</dbReference>
<dbReference type="InterPro" id="IPR023753">
    <property type="entry name" value="FAD/NAD-binding_dom"/>
</dbReference>
<dbReference type="InterPro" id="IPR016156">
    <property type="entry name" value="FAD/NAD-linked_Rdtase_dimer_sf"/>
</dbReference>
<dbReference type="InterPro" id="IPR006258">
    <property type="entry name" value="Lipoamide_DH"/>
</dbReference>
<dbReference type="InterPro" id="IPR001100">
    <property type="entry name" value="Pyr_nuc-diS_OxRdtase"/>
</dbReference>
<dbReference type="InterPro" id="IPR004099">
    <property type="entry name" value="Pyr_nucl-diS_OxRdtase_dimer"/>
</dbReference>
<dbReference type="InterPro" id="IPR012999">
    <property type="entry name" value="Pyr_OxRdtase_I_AS"/>
</dbReference>
<dbReference type="NCBIfam" id="TIGR01350">
    <property type="entry name" value="lipoamide_DH"/>
    <property type="match status" value="1"/>
</dbReference>
<dbReference type="PANTHER" id="PTHR22912:SF223">
    <property type="entry name" value="DIHYDROLIPOYL DEHYDROGENASE 1, MITOCHONDRIAL"/>
    <property type="match status" value="1"/>
</dbReference>
<dbReference type="PANTHER" id="PTHR22912">
    <property type="entry name" value="DISULFIDE OXIDOREDUCTASE"/>
    <property type="match status" value="1"/>
</dbReference>
<dbReference type="Pfam" id="PF07992">
    <property type="entry name" value="Pyr_redox_2"/>
    <property type="match status" value="1"/>
</dbReference>
<dbReference type="Pfam" id="PF02852">
    <property type="entry name" value="Pyr_redox_dim"/>
    <property type="match status" value="1"/>
</dbReference>
<dbReference type="PIRSF" id="PIRSF000350">
    <property type="entry name" value="Mercury_reductase_MerA"/>
    <property type="match status" value="1"/>
</dbReference>
<dbReference type="PRINTS" id="PR00368">
    <property type="entry name" value="FADPNR"/>
</dbReference>
<dbReference type="PRINTS" id="PR00411">
    <property type="entry name" value="PNDRDTASEI"/>
</dbReference>
<dbReference type="SUPFAM" id="SSF51905">
    <property type="entry name" value="FAD/NAD(P)-binding domain"/>
    <property type="match status" value="1"/>
</dbReference>
<dbReference type="SUPFAM" id="SSF55424">
    <property type="entry name" value="FAD/NAD-linked reductases, dimerisation (C-terminal) domain"/>
    <property type="match status" value="1"/>
</dbReference>
<dbReference type="PROSITE" id="PS00076">
    <property type="entry name" value="PYRIDINE_REDOX_1"/>
    <property type="match status" value="1"/>
</dbReference>
<organism>
    <name type="scientific">Arabidopsis thaliana</name>
    <name type="common">Mouse-ear cress</name>
    <dbReference type="NCBI Taxonomy" id="3702"/>
    <lineage>
        <taxon>Eukaryota</taxon>
        <taxon>Viridiplantae</taxon>
        <taxon>Streptophyta</taxon>
        <taxon>Embryophyta</taxon>
        <taxon>Tracheophyta</taxon>
        <taxon>Spermatophyta</taxon>
        <taxon>Magnoliopsida</taxon>
        <taxon>eudicotyledons</taxon>
        <taxon>Gunneridae</taxon>
        <taxon>Pentapetalae</taxon>
        <taxon>rosids</taxon>
        <taxon>malvids</taxon>
        <taxon>Brassicales</taxon>
        <taxon>Brassicaceae</taxon>
        <taxon>Camelineae</taxon>
        <taxon>Arabidopsis</taxon>
    </lineage>
</organism>
<feature type="transit peptide" description="Mitochondrion" evidence="4 5">
    <location>
        <begin position="1"/>
        <end position="36"/>
    </location>
</feature>
<feature type="chain" id="PRO_0000260229" description="Dihydrolipoyl dehydrogenase 1, mitochondrial">
    <location>
        <begin position="37"/>
        <end position="507"/>
    </location>
</feature>
<feature type="active site" description="Proton acceptor" evidence="1">
    <location>
        <position position="486"/>
    </location>
</feature>
<feature type="binding site" evidence="1">
    <location>
        <begin position="73"/>
        <end position="82"/>
    </location>
    <ligand>
        <name>FAD</name>
        <dbReference type="ChEBI" id="CHEBI:57692"/>
    </ligand>
</feature>
<feature type="binding site" evidence="1">
    <location>
        <position position="91"/>
    </location>
    <ligand>
        <name>FAD</name>
        <dbReference type="ChEBI" id="CHEBI:57692"/>
    </ligand>
</feature>
<feature type="binding site" evidence="1">
    <location>
        <position position="155"/>
    </location>
    <ligand>
        <name>FAD</name>
        <dbReference type="ChEBI" id="CHEBI:57692"/>
    </ligand>
</feature>
<feature type="binding site" evidence="1">
    <location>
        <begin position="184"/>
        <end position="186"/>
    </location>
    <ligand>
        <name>FAD</name>
        <dbReference type="ChEBI" id="CHEBI:57692"/>
    </ligand>
</feature>
<feature type="binding site" evidence="1">
    <location>
        <begin position="221"/>
        <end position="228"/>
    </location>
    <ligand>
        <name>NAD(+)</name>
        <dbReference type="ChEBI" id="CHEBI:57540"/>
    </ligand>
</feature>
<feature type="binding site" evidence="1">
    <location>
        <position position="244"/>
    </location>
    <ligand>
        <name>NAD(+)</name>
        <dbReference type="ChEBI" id="CHEBI:57540"/>
    </ligand>
</feature>
<feature type="binding site" evidence="1">
    <location>
        <position position="278"/>
    </location>
    <ligand>
        <name>NAD(+)</name>
        <dbReference type="ChEBI" id="CHEBI:57540"/>
    </ligand>
</feature>
<feature type="binding site" evidence="1">
    <location>
        <position position="313"/>
    </location>
    <ligand>
        <name>NAD(+)</name>
        <dbReference type="ChEBI" id="CHEBI:57540"/>
    </ligand>
</feature>
<feature type="binding site" evidence="1">
    <location>
        <position position="354"/>
    </location>
    <ligand>
        <name>FAD</name>
        <dbReference type="ChEBI" id="CHEBI:57692"/>
    </ligand>
</feature>
<feature type="binding site" evidence="1">
    <location>
        <begin position="360"/>
        <end position="363"/>
    </location>
    <ligand>
        <name>FAD</name>
        <dbReference type="ChEBI" id="CHEBI:57692"/>
    </ligand>
</feature>
<feature type="disulfide bond" description="Redox-active" evidence="1">
    <location>
        <begin position="82"/>
        <end position="87"/>
    </location>
</feature>
<keyword id="KW-1015">Disulfide bond</keyword>
<keyword id="KW-0274">FAD</keyword>
<keyword id="KW-0285">Flavoprotein</keyword>
<keyword id="KW-0496">Mitochondrion</keyword>
<keyword id="KW-0520">NAD</keyword>
<keyword id="KW-0560">Oxidoreductase</keyword>
<keyword id="KW-0676">Redox-active center</keyword>
<keyword id="KW-1185">Reference proteome</keyword>
<keyword id="KW-0809">Transit peptide</keyword>
<evidence type="ECO:0000250" key="1"/>
<evidence type="ECO:0000269" key="2">
    <source>
    </source>
</evidence>
<evidence type="ECO:0000269" key="3">
    <source>
    </source>
</evidence>
<evidence type="ECO:0000269" key="4">
    <source>
    </source>
</evidence>
<evidence type="ECO:0000269" key="5">
    <source>
    </source>
</evidence>
<evidence type="ECO:0000305" key="6"/>
<evidence type="ECO:0000305" key="7">
    <source>
    </source>
</evidence>
<evidence type="ECO:0000305" key="8">
    <source>
    </source>
</evidence>
<gene>
    <name type="primary">LPD1</name>
    <name type="ordered locus">At1g48030</name>
    <name type="ORF">F21D18.28</name>
    <name type="ORF">T2J15.6</name>
</gene>
<reference key="1">
    <citation type="journal article" date="2001" name="Plant Physiol.">
        <title>Characterization of two cDNAs encoding mitochondrial lipoamide dehydrogenase from Arabidopsis.</title>
        <authorList>
            <person name="Lutziger I."/>
            <person name="Oliver D.J."/>
        </authorList>
    </citation>
    <scope>NUCLEOTIDE SEQUENCE [MRNA]</scope>
    <scope>FUNCTION</scope>
    <scope>TISSUE SPECIFICITY</scope>
    <scope>INDUCTION BY LIGHT</scope>
</reference>
<reference key="2">
    <citation type="journal article" date="2000" name="Nature">
        <title>Sequence and analysis of chromosome 1 of the plant Arabidopsis thaliana.</title>
        <authorList>
            <person name="Theologis A."/>
            <person name="Ecker J.R."/>
            <person name="Palm C.J."/>
            <person name="Federspiel N.A."/>
            <person name="Kaul S."/>
            <person name="White O."/>
            <person name="Alonso J."/>
            <person name="Altafi H."/>
            <person name="Araujo R."/>
            <person name="Bowman C.L."/>
            <person name="Brooks S.Y."/>
            <person name="Buehler E."/>
            <person name="Chan A."/>
            <person name="Chao Q."/>
            <person name="Chen H."/>
            <person name="Cheuk R.F."/>
            <person name="Chin C.W."/>
            <person name="Chung M.K."/>
            <person name="Conn L."/>
            <person name="Conway A.B."/>
            <person name="Conway A.R."/>
            <person name="Creasy T.H."/>
            <person name="Dewar K."/>
            <person name="Dunn P."/>
            <person name="Etgu P."/>
            <person name="Feldblyum T.V."/>
            <person name="Feng J.-D."/>
            <person name="Fong B."/>
            <person name="Fujii C.Y."/>
            <person name="Gill J.E."/>
            <person name="Goldsmith A.D."/>
            <person name="Haas B."/>
            <person name="Hansen N.F."/>
            <person name="Hughes B."/>
            <person name="Huizar L."/>
            <person name="Hunter J.L."/>
            <person name="Jenkins J."/>
            <person name="Johnson-Hopson C."/>
            <person name="Khan S."/>
            <person name="Khaykin E."/>
            <person name="Kim C.J."/>
            <person name="Koo H.L."/>
            <person name="Kremenetskaia I."/>
            <person name="Kurtz D.B."/>
            <person name="Kwan A."/>
            <person name="Lam B."/>
            <person name="Langin-Hooper S."/>
            <person name="Lee A."/>
            <person name="Lee J.M."/>
            <person name="Lenz C.A."/>
            <person name="Li J.H."/>
            <person name="Li Y.-P."/>
            <person name="Lin X."/>
            <person name="Liu S.X."/>
            <person name="Liu Z.A."/>
            <person name="Luros J.S."/>
            <person name="Maiti R."/>
            <person name="Marziali A."/>
            <person name="Militscher J."/>
            <person name="Miranda M."/>
            <person name="Nguyen M."/>
            <person name="Nierman W.C."/>
            <person name="Osborne B.I."/>
            <person name="Pai G."/>
            <person name="Peterson J."/>
            <person name="Pham P.K."/>
            <person name="Rizzo M."/>
            <person name="Rooney T."/>
            <person name="Rowley D."/>
            <person name="Sakano H."/>
            <person name="Salzberg S.L."/>
            <person name="Schwartz J.R."/>
            <person name="Shinn P."/>
            <person name="Southwick A.M."/>
            <person name="Sun H."/>
            <person name="Tallon L.J."/>
            <person name="Tambunga G."/>
            <person name="Toriumi M.J."/>
            <person name="Town C.D."/>
            <person name="Utterback T."/>
            <person name="Van Aken S."/>
            <person name="Vaysberg M."/>
            <person name="Vysotskaia V.S."/>
            <person name="Walker M."/>
            <person name="Wu D."/>
            <person name="Yu G."/>
            <person name="Fraser C.M."/>
            <person name="Venter J.C."/>
            <person name="Davis R.W."/>
        </authorList>
    </citation>
    <scope>NUCLEOTIDE SEQUENCE [LARGE SCALE GENOMIC DNA]</scope>
    <source>
        <strain>cv. Columbia</strain>
    </source>
</reference>
<reference key="3">
    <citation type="journal article" date="2017" name="Plant J.">
        <title>Araport11: a complete reannotation of the Arabidopsis thaliana reference genome.</title>
        <authorList>
            <person name="Cheng C.Y."/>
            <person name="Krishnakumar V."/>
            <person name="Chan A.P."/>
            <person name="Thibaud-Nissen F."/>
            <person name="Schobel S."/>
            <person name="Town C.D."/>
        </authorList>
    </citation>
    <scope>GENOME REANNOTATION</scope>
    <source>
        <strain>cv. Columbia</strain>
    </source>
</reference>
<reference key="4">
    <citation type="journal article" date="2001" name="Trends Plant Sci.">
        <title>The glycine decarboxylase system: a fascinating complex.</title>
        <authorList>
            <person name="Douce R."/>
            <person name="Bourguignon J."/>
            <person name="Neuburger M."/>
            <person name="Rebeille F."/>
        </authorList>
    </citation>
    <scope>REVIEW</scope>
</reference>
<reference key="5">
    <citation type="journal article" date="2003" name="J. Exp. Bot.">
        <title>Genetic manipulation of glycine decarboxylation.</title>
        <authorList>
            <person name="Bauwe H."/>
            <person name="Kolukisaoglu U."/>
        </authorList>
    </citation>
    <scope>REVIEW</scope>
    <scope>NOMENCLATURE</scope>
</reference>
<reference key="6">
    <citation type="journal article" date="2004" name="Plant Cell">
        <title>Experimental analysis of the Arabidopsis mitochondrial proteome highlights signaling and regulatory components, provides assessment of targeting prediction programs, and indicates plant-specific mitochondrial proteins.</title>
        <authorList>
            <person name="Heazlewood J.L."/>
            <person name="Tonti-Filippini J.S."/>
            <person name="Gout A.M."/>
            <person name="Day D.A."/>
            <person name="Whelan J."/>
            <person name="Millar A.H."/>
        </authorList>
    </citation>
    <scope>IDENTIFICATION BY MASS SPECTROMETRY</scope>
    <scope>SUBCELLULAR LOCATION [LARGE SCALE ANALYSIS]</scope>
    <source>
        <strain>cv. Landsberg erecta</strain>
    </source>
</reference>
<reference key="7">
    <citation type="journal article" date="2010" name="Plant Physiol.">
        <title>Regulation of plant glycine decarboxylase by s-nitrosylation and glutathionylation.</title>
        <authorList>
            <person name="Palmieri M.C."/>
            <person name="Lindermayr C."/>
            <person name="Bauwe H."/>
            <person name="Steinhauser C."/>
            <person name="Durner J."/>
        </authorList>
    </citation>
    <scope>S-NITROSYLATION</scope>
</reference>
<reference key="8">
    <citation type="journal article" date="2015" name="J. Exp. Bot.">
        <title>Identification of cleavage sites and substrate proteins for two mitochondrial intermediate peptidases in Arabidopsis thaliana.</title>
        <authorList>
            <person name="Carrie C."/>
            <person name="Venne A.S."/>
            <person name="Zahedi R.P."/>
            <person name="Soll J."/>
        </authorList>
    </citation>
    <scope>IDENTIFICATION BY MASS SPECTROMETRY</scope>
    <scope>CLEAVAGE OF TRANSIT PEPTIDE AFTER PHE-36</scope>
</reference>
<reference key="9">
    <citation type="journal article" date="2015" name="Plant Physiol.">
        <title>INTERMEDIATE CLEAVAGE PEPTIDASE55 modifies enzyme amino termini and alters protein stability in Arabidopsis mitochondria.</title>
        <authorList>
            <person name="Huang S."/>
            <person name="Nelson C.J."/>
            <person name="Li L."/>
            <person name="Taylor N.L."/>
            <person name="Stroeher E."/>
            <person name="Peteriet J."/>
            <person name="Millar A.H."/>
        </authorList>
    </citation>
    <scope>IDENTIFICATION BY MASS SPECTROMETRY</scope>
    <scope>CLEAVAGE OF TRANSIT PEPTIDE AFTER PHE-36</scope>
</reference>
<name>DLDH1_ARATH</name>
<comment type="function">
    <text evidence="2">Lipoamide dehydrogenase is a component of the glycine decarboxylase (GDC) or glycine cleavage system as well as of the alpha-ketoacid dehydrogenase complexes. LPD1 is probably the protein most often associated with the glycine decarboxylase complex while LPD2 is probably incorporated into alpha-ketoacid dehydrogenase complexes.</text>
</comment>
<comment type="catalytic activity">
    <reaction>
        <text>N(6)-[(R)-dihydrolipoyl]-L-lysyl-[protein] + NAD(+) = N(6)-[(R)-lipoyl]-L-lysyl-[protein] + NADH + H(+)</text>
        <dbReference type="Rhea" id="RHEA:15045"/>
        <dbReference type="Rhea" id="RHEA-COMP:10474"/>
        <dbReference type="Rhea" id="RHEA-COMP:10475"/>
        <dbReference type="ChEBI" id="CHEBI:15378"/>
        <dbReference type="ChEBI" id="CHEBI:57540"/>
        <dbReference type="ChEBI" id="CHEBI:57945"/>
        <dbReference type="ChEBI" id="CHEBI:83099"/>
        <dbReference type="ChEBI" id="CHEBI:83100"/>
        <dbReference type="EC" id="1.8.1.4"/>
    </reaction>
</comment>
<comment type="cofactor">
    <cofactor evidence="1">
        <name>FAD</name>
        <dbReference type="ChEBI" id="CHEBI:57692"/>
    </cofactor>
    <text evidence="1">Binds 1 FAD per subunit.</text>
</comment>
<comment type="subunit">
    <text evidence="1">Homodimer (By similarity). Part of both the glycine cleavage system composed of four proteins: P, T, L and H and of the pyruvate dehydrogenase complex containing multiple copies of three enzymatic components: pyruvate dehydrogenase (E1), dihydrolipoamide acetyltransferase (E2) and lipoamide dehydrogenase (E3).</text>
</comment>
<comment type="subcellular location">
    <subcellularLocation>
        <location evidence="3 7 8">Mitochondrion matrix</location>
    </subcellularLocation>
</comment>
<comment type="tissue specificity">
    <text evidence="2">Preferentially expressed in leaves, flowers and siliques and at a lower level in roots and stems.</text>
</comment>
<comment type="induction">
    <text evidence="2">Up-regulated by light.</text>
</comment>
<comment type="PTM">
    <text>S-nytrosylated at unknown positions.</text>
</comment>
<comment type="miscellaneous">
    <text>The active site is a redox-active disulfide bond.</text>
</comment>
<comment type="similarity">
    <text evidence="6">Belongs to the class-I pyridine nucleotide-disulfide oxidoreductase family.</text>
</comment>
<comment type="sequence caution" evidence="6">
    <conflict type="erroneous initiation">
        <sequence resource="EMBL-CDS" id="AAF79529"/>
    </conflict>
    <text>Truncated N-terminus.</text>
</comment>
<accession>Q9M5K3</accession>
<accession>Q9LNF3</accession>